<evidence type="ECO:0000255" key="1">
    <source>
        <dbReference type="HAMAP-Rule" id="MF_00670"/>
    </source>
</evidence>
<proteinExistence type="inferred from homology"/>
<name>UXAB_PECAS</name>
<reference key="1">
    <citation type="journal article" date="2004" name="Proc. Natl. Acad. Sci. U.S.A.">
        <title>Genome sequence of the enterobacterial phytopathogen Erwinia carotovora subsp. atroseptica and characterization of virulence factors.</title>
        <authorList>
            <person name="Bell K.S."/>
            <person name="Sebaihia M."/>
            <person name="Pritchard L."/>
            <person name="Holden M.T.G."/>
            <person name="Hyman L.J."/>
            <person name="Holeva M.C."/>
            <person name="Thomson N.R."/>
            <person name="Bentley S.D."/>
            <person name="Churcher L.J.C."/>
            <person name="Mungall K."/>
            <person name="Atkin R."/>
            <person name="Bason N."/>
            <person name="Brooks K."/>
            <person name="Chillingworth T."/>
            <person name="Clark K."/>
            <person name="Doggett J."/>
            <person name="Fraser A."/>
            <person name="Hance Z."/>
            <person name="Hauser H."/>
            <person name="Jagels K."/>
            <person name="Moule S."/>
            <person name="Norbertczak H."/>
            <person name="Ormond D."/>
            <person name="Price C."/>
            <person name="Quail M.A."/>
            <person name="Sanders M."/>
            <person name="Walker D."/>
            <person name="Whitehead S."/>
            <person name="Salmond G.P.C."/>
            <person name="Birch P.R.J."/>
            <person name="Parkhill J."/>
            <person name="Toth I.K."/>
        </authorList>
    </citation>
    <scope>NUCLEOTIDE SEQUENCE [LARGE SCALE GENOMIC DNA]</scope>
    <source>
        <strain>SCRI 1043 / ATCC BAA-672</strain>
    </source>
</reference>
<feature type="chain" id="PRO_0000170744" description="Altronate oxidoreductase">
    <location>
        <begin position="1"/>
        <end position="488"/>
    </location>
</feature>
<feature type="binding site" evidence="1">
    <location>
        <begin position="18"/>
        <end position="29"/>
    </location>
    <ligand>
        <name>NAD(+)</name>
        <dbReference type="ChEBI" id="CHEBI:57540"/>
    </ligand>
</feature>
<sequence>MQTLNRRNFPGRQHPDRVIQFGEGNFLRAFVDWQLDLLNEHTDLDAGIVIVRPIDSDFPPALDTQDGLYTTIIRGLNEQGEAVREPRLIRSVNREINVYRQFDEYLALAHDPNIRFVFSNTTEAGISYHADDRLSDAPPVSFPAKLTRLLYERFCHFDGAADKGWVLLPCELIDYNGVALKELVLRYAAQWELTSTFTAWLNDHNTFCSTLVDRIVTGYPRAEVEALQQEMGYQDTFWDTAEHFYLFVIQGPLWLAEELRLNKLDLNVRIVDDIKPYKERKVAILNGAHTALVPVAFLAGLDTVGESMNDALIGKFVEKTIAEEIVPVLDLPHDELTSFAQAVLSRFRNPFIQHQLLSISLNGMTKFRTRILPQLLTYRERHGELPARLTFALAALIAFYRGERSGEGDALQAYPLQDDAHWLERYSTLWAGVKENTVSLAELVNVVLRDADHWEQDLTQVPGLAAQVTEQLQTIVERGMRAAVEGYC</sequence>
<protein>
    <recommendedName>
        <fullName evidence="1">Altronate oxidoreductase</fullName>
        <ecNumber evidence="1">1.1.1.58</ecNumber>
    </recommendedName>
    <alternativeName>
        <fullName evidence="1">Tagaturonate dehydrogenase</fullName>
    </alternativeName>
    <alternativeName>
        <fullName evidence="1">Tagaturonate reductase</fullName>
    </alternativeName>
</protein>
<accession>Q6D9G9</accession>
<organism>
    <name type="scientific">Pectobacterium atrosepticum (strain SCRI 1043 / ATCC BAA-672)</name>
    <name type="common">Erwinia carotovora subsp. atroseptica</name>
    <dbReference type="NCBI Taxonomy" id="218491"/>
    <lineage>
        <taxon>Bacteria</taxon>
        <taxon>Pseudomonadati</taxon>
        <taxon>Pseudomonadota</taxon>
        <taxon>Gammaproteobacteria</taxon>
        <taxon>Enterobacterales</taxon>
        <taxon>Pectobacteriaceae</taxon>
        <taxon>Pectobacterium</taxon>
    </lineage>
</organism>
<keyword id="KW-0520">NAD</keyword>
<keyword id="KW-0560">Oxidoreductase</keyword>
<keyword id="KW-1185">Reference proteome</keyword>
<gene>
    <name evidence="1" type="primary">uxaB</name>
    <name type="ordered locus">ECA0646</name>
</gene>
<dbReference type="EC" id="1.1.1.58" evidence="1"/>
<dbReference type="EMBL" id="BX950851">
    <property type="protein sequence ID" value="CAG73561.1"/>
    <property type="molecule type" value="Genomic_DNA"/>
</dbReference>
<dbReference type="RefSeq" id="WP_011092263.1">
    <property type="nucleotide sequence ID" value="NC_004547.2"/>
</dbReference>
<dbReference type="SMR" id="Q6D9G9"/>
<dbReference type="STRING" id="218491.ECA0646"/>
<dbReference type="KEGG" id="eca:ECA0646"/>
<dbReference type="PATRIC" id="fig|218491.5.peg.641"/>
<dbReference type="eggNOG" id="COG0246">
    <property type="taxonomic scope" value="Bacteria"/>
</dbReference>
<dbReference type="HOGENOM" id="CLU_027324_1_0_6"/>
<dbReference type="OrthoDB" id="9768714at2"/>
<dbReference type="UniPathway" id="UPA00246"/>
<dbReference type="Proteomes" id="UP000007966">
    <property type="component" value="Chromosome"/>
</dbReference>
<dbReference type="GO" id="GO:0005829">
    <property type="term" value="C:cytosol"/>
    <property type="evidence" value="ECO:0007669"/>
    <property type="project" value="TreeGrafter"/>
</dbReference>
<dbReference type="GO" id="GO:0008926">
    <property type="term" value="F:mannitol-1-phosphate 5-dehydrogenase activity"/>
    <property type="evidence" value="ECO:0007669"/>
    <property type="project" value="TreeGrafter"/>
</dbReference>
<dbReference type="GO" id="GO:0009026">
    <property type="term" value="F:tagaturonate reductase activity"/>
    <property type="evidence" value="ECO:0007669"/>
    <property type="project" value="UniProtKB-UniRule"/>
</dbReference>
<dbReference type="GO" id="GO:0019698">
    <property type="term" value="P:D-galacturonate catabolic process"/>
    <property type="evidence" value="ECO:0007669"/>
    <property type="project" value="TreeGrafter"/>
</dbReference>
<dbReference type="GO" id="GO:0019592">
    <property type="term" value="P:mannitol catabolic process"/>
    <property type="evidence" value="ECO:0007669"/>
    <property type="project" value="TreeGrafter"/>
</dbReference>
<dbReference type="Gene3D" id="1.10.1040.10">
    <property type="entry name" value="N-(1-d-carboxylethyl)-l-norvaline Dehydrogenase, domain 2"/>
    <property type="match status" value="1"/>
</dbReference>
<dbReference type="Gene3D" id="3.40.50.720">
    <property type="entry name" value="NAD(P)-binding Rossmann-like Domain"/>
    <property type="match status" value="1"/>
</dbReference>
<dbReference type="HAMAP" id="MF_00670">
    <property type="entry name" value="Altron_oxidoreduct"/>
    <property type="match status" value="1"/>
</dbReference>
<dbReference type="InterPro" id="IPR008927">
    <property type="entry name" value="6-PGluconate_DH-like_C_sf"/>
</dbReference>
<dbReference type="InterPro" id="IPR013328">
    <property type="entry name" value="6PGD_dom2"/>
</dbReference>
<dbReference type="InterPro" id="IPR023668">
    <property type="entry name" value="Altronate_OxRdtase"/>
</dbReference>
<dbReference type="InterPro" id="IPR013118">
    <property type="entry name" value="Mannitol_DH_C"/>
</dbReference>
<dbReference type="InterPro" id="IPR013131">
    <property type="entry name" value="Mannitol_DH_N"/>
</dbReference>
<dbReference type="InterPro" id="IPR036291">
    <property type="entry name" value="NAD(P)-bd_dom_sf"/>
</dbReference>
<dbReference type="NCBIfam" id="NF002969">
    <property type="entry name" value="PRK03643.1"/>
    <property type="match status" value="1"/>
</dbReference>
<dbReference type="PANTHER" id="PTHR30524:SF0">
    <property type="entry name" value="ALTRONATE OXIDOREDUCTASE-RELATED"/>
    <property type="match status" value="1"/>
</dbReference>
<dbReference type="PANTHER" id="PTHR30524">
    <property type="entry name" value="MANNITOL-1-PHOSPHATE 5-DEHYDROGENASE"/>
    <property type="match status" value="1"/>
</dbReference>
<dbReference type="Pfam" id="PF01232">
    <property type="entry name" value="Mannitol_dh"/>
    <property type="match status" value="1"/>
</dbReference>
<dbReference type="Pfam" id="PF08125">
    <property type="entry name" value="Mannitol_dh_C"/>
    <property type="match status" value="1"/>
</dbReference>
<dbReference type="SUPFAM" id="SSF48179">
    <property type="entry name" value="6-phosphogluconate dehydrogenase C-terminal domain-like"/>
    <property type="match status" value="1"/>
</dbReference>
<dbReference type="SUPFAM" id="SSF51735">
    <property type="entry name" value="NAD(P)-binding Rossmann-fold domains"/>
    <property type="match status" value="1"/>
</dbReference>
<comment type="catalytic activity">
    <reaction evidence="1">
        <text>D-altronate + NAD(+) = keto-D-tagaturonate + NADH + H(+)</text>
        <dbReference type="Rhea" id="RHEA:17813"/>
        <dbReference type="ChEBI" id="CHEBI:15378"/>
        <dbReference type="ChEBI" id="CHEBI:17360"/>
        <dbReference type="ChEBI" id="CHEBI:17886"/>
        <dbReference type="ChEBI" id="CHEBI:57540"/>
        <dbReference type="ChEBI" id="CHEBI:57945"/>
        <dbReference type="EC" id="1.1.1.58"/>
    </reaction>
</comment>
<comment type="pathway">
    <text evidence="1">Carbohydrate metabolism; pentose and glucuronate interconversion.</text>
</comment>
<comment type="similarity">
    <text evidence="1">Belongs to the mannitol dehydrogenase family. UxaB subfamily.</text>
</comment>